<sequence>MVLIKVLANLLVLQLSYAQKSSELVVGGDECNINEHRSLVFLYNNSFGCSGTLINQQWVLSAVHCDMENVRIYLGVHNLTLRNNAEIRLPEERFFCLSNKNYTKWDKDIMLIKLDRPVKTSTYIAPLSLPSSPPRVGSVCRIMGWGAITSPNETFPGVTHCANINILPYSVCRAAYKGLPAQSRTLCGGILEGGIGSCMGDSGGPLICNGEMHGIVAWGDDTCAQPHKPVHYTKVYDYTDWIQSIIAGNTAATCPP</sequence>
<keyword id="KW-1015">Disulfide bond</keyword>
<keyword id="KW-1206">Fibrinogenolytic toxin</keyword>
<keyword id="KW-0325">Glycoprotein</keyword>
<keyword id="KW-1199">Hemostasis impairing toxin</keyword>
<keyword id="KW-0378">Hydrolase</keyword>
<keyword id="KW-0645">Protease</keyword>
<keyword id="KW-0964">Secreted</keyword>
<keyword id="KW-0720">Serine protease</keyword>
<keyword id="KW-0732">Signal</keyword>
<keyword id="KW-0800">Toxin</keyword>
<keyword id="KW-0865">Zymogen</keyword>
<comment type="function">
    <text evidence="2">Snake venom serine protease that has fibrinogenolytic activities by hydrolyzing the beta chain of fibrinogen (FGB). Typical arginine esterase which hydrolyzes esters and amides of arginine.</text>
</comment>
<comment type="subunit">
    <text evidence="1">Monomer.</text>
</comment>
<comment type="subcellular location">
    <subcellularLocation>
        <location evidence="1">Secreted</location>
    </subcellularLocation>
</comment>
<comment type="tissue specificity">
    <text evidence="6">Expressed by the venom gland.</text>
</comment>
<comment type="similarity">
    <text evidence="6">Belongs to the peptidase S1 family. Snake venom subfamily.</text>
</comment>
<feature type="signal peptide" evidence="3">
    <location>
        <begin position="1"/>
        <end position="18"/>
    </location>
</feature>
<feature type="propeptide" id="PRO_0000432328" evidence="2">
    <location>
        <begin position="19"/>
        <end position="24"/>
    </location>
</feature>
<feature type="chain" id="PRO_0000432329" description="Beta-fibrinogenase-like">
    <location>
        <begin position="25"/>
        <end position="256"/>
    </location>
</feature>
<feature type="domain" description="Peptidase S1" evidence="4">
    <location>
        <begin position="25"/>
        <end position="247"/>
    </location>
</feature>
<feature type="active site" description="Charge relay system" evidence="1">
    <location>
        <position position="64"/>
    </location>
</feature>
<feature type="active site" description="Charge relay system" evidence="1">
    <location>
        <position position="108"/>
    </location>
</feature>
<feature type="active site" description="Charge relay system" evidence="1">
    <location>
        <position position="202"/>
    </location>
</feature>
<feature type="glycosylation site" description="N-linked (GlcNAc...) asparagine" evidence="3">
    <location>
        <position position="44"/>
    </location>
</feature>
<feature type="glycosylation site" description="N-linked (GlcNAc...) asparagine" evidence="3">
    <location>
        <position position="78"/>
    </location>
</feature>
<feature type="glycosylation site" description="N-linked (GlcNAc...) asparagine" evidence="3">
    <location>
        <position position="101"/>
    </location>
</feature>
<feature type="glycosylation site" description="N-linked (GlcNAc...) asparagine" evidence="3">
    <location>
        <position position="152"/>
    </location>
</feature>
<feature type="disulfide bond" evidence="4">
    <location>
        <begin position="31"/>
        <end position="161"/>
    </location>
</feature>
<feature type="disulfide bond" evidence="4">
    <location>
        <begin position="49"/>
        <end position="65"/>
    </location>
</feature>
<feature type="disulfide bond" evidence="4">
    <location>
        <begin position="96"/>
        <end position="254"/>
    </location>
</feature>
<feature type="disulfide bond" evidence="4">
    <location>
        <begin position="140"/>
        <end position="208"/>
    </location>
</feature>
<feature type="disulfide bond" evidence="4">
    <location>
        <begin position="172"/>
        <end position="187"/>
    </location>
</feature>
<feature type="disulfide bond" evidence="4">
    <location>
        <begin position="198"/>
        <end position="223"/>
    </location>
</feature>
<proteinExistence type="evidence at transcript level"/>
<reference key="1">
    <citation type="journal article" date="2011" name="Toxicon">
        <title>Phylogenetic analysis of serine proteases from Russell's viper (Daboia russelli siamensis) and Agkistrodon piscivorus leucostoma venom.</title>
        <authorList>
            <person name="Sukkapan P."/>
            <person name="Jia Y."/>
            <person name="Nuchprayoon I."/>
            <person name="Perez J.C."/>
        </authorList>
    </citation>
    <scope>NUCLEOTIDE SEQUENCE [MRNA]</scope>
    <source>
        <tissue>Venom gland</tissue>
    </source>
</reference>
<evidence type="ECO:0000250" key="1"/>
<evidence type="ECO:0000250" key="2">
    <source>
        <dbReference type="UniProtKB" id="E0Y419"/>
    </source>
</evidence>
<evidence type="ECO:0000255" key="3"/>
<evidence type="ECO:0000255" key="4">
    <source>
        <dbReference type="PROSITE-ProRule" id="PRU00274"/>
    </source>
</evidence>
<evidence type="ECO:0000303" key="5">
    <source>
    </source>
</evidence>
<evidence type="ECO:0000305" key="6"/>
<protein>
    <recommendedName>
        <fullName evidence="5">Beta-fibrinogenase-like</fullName>
        <shortName evidence="5">RVBF</shortName>
        <ecNumber>3.4.21.-</ecNumber>
    </recommendedName>
    <alternativeName>
        <fullName evidence="6">Snake venom serine protease</fullName>
        <shortName evidence="6">SVSP</shortName>
    </alternativeName>
</protein>
<name>VSPB_DABSI</name>
<dbReference type="EC" id="3.4.21.-"/>
<dbReference type="EMBL" id="HQ270465">
    <property type="protein sequence ID" value="ADP88560.1"/>
    <property type="molecule type" value="mRNA"/>
</dbReference>
<dbReference type="SMR" id="E5L0E4"/>
<dbReference type="GO" id="GO:0005576">
    <property type="term" value="C:extracellular region"/>
    <property type="evidence" value="ECO:0007669"/>
    <property type="project" value="UniProtKB-SubCell"/>
</dbReference>
<dbReference type="GO" id="GO:0030141">
    <property type="term" value="C:secretory granule"/>
    <property type="evidence" value="ECO:0007669"/>
    <property type="project" value="TreeGrafter"/>
</dbReference>
<dbReference type="GO" id="GO:0004252">
    <property type="term" value="F:serine-type endopeptidase activity"/>
    <property type="evidence" value="ECO:0007669"/>
    <property type="project" value="InterPro"/>
</dbReference>
<dbReference type="GO" id="GO:0090729">
    <property type="term" value="F:toxin activity"/>
    <property type="evidence" value="ECO:0007669"/>
    <property type="project" value="UniProtKB-KW"/>
</dbReference>
<dbReference type="GO" id="GO:0006508">
    <property type="term" value="P:proteolysis"/>
    <property type="evidence" value="ECO:0007669"/>
    <property type="project" value="UniProtKB-KW"/>
</dbReference>
<dbReference type="CDD" id="cd00190">
    <property type="entry name" value="Tryp_SPc"/>
    <property type="match status" value="1"/>
</dbReference>
<dbReference type="FunFam" id="2.40.10.10:FF:000010">
    <property type="entry name" value="Kallikrein related peptidase 11"/>
    <property type="match status" value="1"/>
</dbReference>
<dbReference type="Gene3D" id="2.40.10.10">
    <property type="entry name" value="Trypsin-like serine proteases"/>
    <property type="match status" value="2"/>
</dbReference>
<dbReference type="InterPro" id="IPR009003">
    <property type="entry name" value="Peptidase_S1_PA"/>
</dbReference>
<dbReference type="InterPro" id="IPR043504">
    <property type="entry name" value="Peptidase_S1_PA_chymotrypsin"/>
</dbReference>
<dbReference type="InterPro" id="IPR001314">
    <property type="entry name" value="Peptidase_S1A"/>
</dbReference>
<dbReference type="InterPro" id="IPR001254">
    <property type="entry name" value="Trypsin_dom"/>
</dbReference>
<dbReference type="InterPro" id="IPR033116">
    <property type="entry name" value="TRYPSIN_SER"/>
</dbReference>
<dbReference type="PANTHER" id="PTHR24271:SF47">
    <property type="entry name" value="KALLIKREIN-1"/>
    <property type="match status" value="1"/>
</dbReference>
<dbReference type="PANTHER" id="PTHR24271">
    <property type="entry name" value="KALLIKREIN-RELATED"/>
    <property type="match status" value="1"/>
</dbReference>
<dbReference type="Pfam" id="PF00089">
    <property type="entry name" value="Trypsin"/>
    <property type="match status" value="1"/>
</dbReference>
<dbReference type="PRINTS" id="PR00722">
    <property type="entry name" value="CHYMOTRYPSIN"/>
</dbReference>
<dbReference type="SMART" id="SM00020">
    <property type="entry name" value="Tryp_SPc"/>
    <property type="match status" value="1"/>
</dbReference>
<dbReference type="SUPFAM" id="SSF50494">
    <property type="entry name" value="Trypsin-like serine proteases"/>
    <property type="match status" value="1"/>
</dbReference>
<dbReference type="PROSITE" id="PS50240">
    <property type="entry name" value="TRYPSIN_DOM"/>
    <property type="match status" value="1"/>
</dbReference>
<dbReference type="PROSITE" id="PS00135">
    <property type="entry name" value="TRYPSIN_SER"/>
    <property type="match status" value="1"/>
</dbReference>
<organism>
    <name type="scientific">Daboia siamensis</name>
    <name type="common">Eastern Russel's viper</name>
    <name type="synonym">Daboia russelii siamensis</name>
    <dbReference type="NCBI Taxonomy" id="343250"/>
    <lineage>
        <taxon>Eukaryota</taxon>
        <taxon>Metazoa</taxon>
        <taxon>Chordata</taxon>
        <taxon>Craniata</taxon>
        <taxon>Vertebrata</taxon>
        <taxon>Euteleostomi</taxon>
        <taxon>Lepidosauria</taxon>
        <taxon>Squamata</taxon>
        <taxon>Bifurcata</taxon>
        <taxon>Unidentata</taxon>
        <taxon>Episquamata</taxon>
        <taxon>Toxicofera</taxon>
        <taxon>Serpentes</taxon>
        <taxon>Colubroidea</taxon>
        <taxon>Viperidae</taxon>
        <taxon>Viperinae</taxon>
        <taxon>Daboia</taxon>
    </lineage>
</organism>
<accession>E5L0E4</accession>